<comment type="function">
    <text evidence="1">Transfers 2'-(5-triphosphoribosyl)-3'-dephosphocoenzyme-A to the apo-[acyl-carrier-protein] of the malonate decarboxylase to yield holo-[acyl-carrier-protein].</text>
</comment>
<comment type="catalytic activity">
    <reaction evidence="1">
        <text>apo-[malonate decarboxylase ACP] + 2'-(5''-triphospho-alpha-D-ribosyl)-3'-dephospho-CoA = holo-[malonate decarboxylase ACP] + diphosphate</text>
        <dbReference type="Rhea" id="RHEA:42644"/>
        <dbReference type="Rhea" id="RHEA-COMP:10160"/>
        <dbReference type="Rhea" id="RHEA-COMP:10161"/>
        <dbReference type="ChEBI" id="CHEBI:29999"/>
        <dbReference type="ChEBI" id="CHEBI:33019"/>
        <dbReference type="ChEBI" id="CHEBI:61378"/>
        <dbReference type="ChEBI" id="CHEBI:82683"/>
        <dbReference type="EC" id="2.7.7.66"/>
    </reaction>
</comment>
<comment type="similarity">
    <text evidence="1">Belongs to the MdcG family.</text>
</comment>
<gene>
    <name evidence="1" type="primary">mdcG</name>
    <name type="ordered locus">PFL_5815</name>
</gene>
<proteinExistence type="inferred from homology"/>
<reference key="1">
    <citation type="journal article" date="2005" name="Nat. Biotechnol.">
        <title>Complete genome sequence of the plant commensal Pseudomonas fluorescens Pf-5.</title>
        <authorList>
            <person name="Paulsen I.T."/>
            <person name="Press C.M."/>
            <person name="Ravel J."/>
            <person name="Kobayashi D.Y."/>
            <person name="Myers G.S.A."/>
            <person name="Mavrodi D.V."/>
            <person name="DeBoy R.T."/>
            <person name="Seshadri R."/>
            <person name="Ren Q."/>
            <person name="Madupu R."/>
            <person name="Dodson R.J."/>
            <person name="Durkin A.S."/>
            <person name="Brinkac L.M."/>
            <person name="Daugherty S.C."/>
            <person name="Sullivan S.A."/>
            <person name="Rosovitz M.J."/>
            <person name="Gwinn M.L."/>
            <person name="Zhou L."/>
            <person name="Schneider D.J."/>
            <person name="Cartinhour S.W."/>
            <person name="Nelson W.C."/>
            <person name="Weidman J."/>
            <person name="Watkins K."/>
            <person name="Tran K."/>
            <person name="Khouri H."/>
            <person name="Pierson E.A."/>
            <person name="Pierson L.S. III"/>
            <person name="Thomashow L.S."/>
            <person name="Loper J.E."/>
        </authorList>
    </citation>
    <scope>NUCLEOTIDE SEQUENCE [LARGE SCALE GENOMIC DNA]</scope>
    <source>
        <strain>ATCC BAA-477 / NRRL B-23932 / Pf-5</strain>
    </source>
</reference>
<name>MDCG_PSEF5</name>
<keyword id="KW-0548">Nucleotidyltransferase</keyword>
<keyword id="KW-0808">Transferase</keyword>
<dbReference type="EC" id="2.7.7.66" evidence="1"/>
<dbReference type="EMBL" id="CP000076">
    <property type="protein sequence ID" value="AAY95005.1"/>
    <property type="molecule type" value="Genomic_DNA"/>
</dbReference>
<dbReference type="RefSeq" id="WP_011063989.1">
    <property type="nucleotide sequence ID" value="NC_004129.6"/>
</dbReference>
<dbReference type="STRING" id="220664.PFL_5815"/>
<dbReference type="KEGG" id="pfl:PFL_5815"/>
<dbReference type="PATRIC" id="fig|220664.5.peg.5929"/>
<dbReference type="eggNOG" id="ENOG502Z8NU">
    <property type="taxonomic scope" value="Bacteria"/>
</dbReference>
<dbReference type="HOGENOM" id="CLU_111981_0_0_6"/>
<dbReference type="Proteomes" id="UP000008540">
    <property type="component" value="Chromosome"/>
</dbReference>
<dbReference type="GO" id="GO:0016779">
    <property type="term" value="F:nucleotidyltransferase activity"/>
    <property type="evidence" value="ECO:0007669"/>
    <property type="project" value="UniProtKB-UniRule"/>
</dbReference>
<dbReference type="HAMAP" id="MF_00650">
    <property type="entry name" value="Malonate_MdcG"/>
    <property type="match status" value="1"/>
</dbReference>
<dbReference type="InterPro" id="IPR017557">
    <property type="entry name" value="Holo-ACP_synthase"/>
</dbReference>
<dbReference type="InterPro" id="IPR049180">
    <property type="entry name" value="MdcG_C"/>
</dbReference>
<dbReference type="InterPro" id="IPR048903">
    <property type="entry name" value="MdcG_N"/>
</dbReference>
<dbReference type="NCBIfam" id="TIGR03135">
    <property type="entry name" value="malonate_mdcG"/>
    <property type="match status" value="1"/>
</dbReference>
<dbReference type="NCBIfam" id="NF002332">
    <property type="entry name" value="PRK01293.1"/>
    <property type="match status" value="1"/>
</dbReference>
<dbReference type="Pfam" id="PF10620">
    <property type="entry name" value="MdcG"/>
    <property type="match status" value="1"/>
</dbReference>
<dbReference type="Pfam" id="PF20866">
    <property type="entry name" value="MdcG_N"/>
    <property type="match status" value="1"/>
</dbReference>
<accession>Q4K4G0</accession>
<organism>
    <name type="scientific">Pseudomonas fluorescens (strain ATCC BAA-477 / NRRL B-23932 / Pf-5)</name>
    <dbReference type="NCBI Taxonomy" id="220664"/>
    <lineage>
        <taxon>Bacteria</taxon>
        <taxon>Pseudomonadati</taxon>
        <taxon>Pseudomonadota</taxon>
        <taxon>Gammaproteobacteria</taxon>
        <taxon>Pseudomonadales</taxon>
        <taxon>Pseudomonadaceae</taxon>
        <taxon>Pseudomonas</taxon>
    </lineage>
</organism>
<protein>
    <recommendedName>
        <fullName evidence="1">Phosphoribosyl-dephospho-CoA transferase</fullName>
        <ecNumber evidence="1">2.7.7.66</ecNumber>
    </recommendedName>
    <alternativeName>
        <fullName evidence="1">Malonate decarboxylase holo-[acyl-carrier-protein] synthase</fullName>
        <shortName evidence="1">Holo-ACP synthase</shortName>
    </alternativeName>
</protein>
<feature type="chain" id="PRO_1000061472" description="Phosphoribosyl-dephospho-CoA transferase">
    <location>
        <begin position="1"/>
        <end position="208"/>
    </location>
</feature>
<feature type="active site" evidence="1">
    <location>
        <position position="133"/>
    </location>
</feature>
<feature type="active site" evidence="1">
    <location>
        <position position="135"/>
    </location>
</feature>
<evidence type="ECO:0000255" key="1">
    <source>
        <dbReference type="HAMAP-Rule" id="MF_00650"/>
    </source>
</evidence>
<sequence length="208" mass="22229">MSGCGPWLPHDLLWGMTPAQLPGDAPAWAHAVLEAGQPVVVRRALTAPGQVAVGLRGVSREQRYPALLDLQAVQRGVRPEQLCHVPPQGPWPALQALQHLRDELDAQEWIWGVSGSAGFELASGVAALHQHSDLDLILRTPELLPRARARELLALLDGAGCPVDMQLQVPGGALALREWAGPAARVLLKSASGARLVSDPWNPQEQAA</sequence>